<comment type="function">
    <text evidence="3 4">Antibacterial peptide mostly active against Gram-positive and Gram negative bacteria.</text>
</comment>
<comment type="subcellular location">
    <subcellularLocation>
        <location evidence="2 3 4">Secreted</location>
    </subcellularLocation>
</comment>
<comment type="tissue specificity">
    <text evidence="3 4">Hemolymph and fat body.</text>
</comment>
<comment type="induction">
    <text evidence="3 4">By bacterial infection.</text>
</comment>
<comment type="mass spectrometry" mass="3596.9" method="MALDI" evidence="4"/>
<comment type="similarity">
    <text evidence="2">Belongs to the invertebrate defensin family. Type 1 subfamily.</text>
</comment>
<protein>
    <recommendedName>
        <fullName evidence="5 6">Defensin-A</fullName>
        <shortName evidence="8">DefA</shortName>
        <shortName evidence="5">GmDefA</shortName>
    </recommendedName>
</protein>
<name>DEF_GLOMM</name>
<keyword id="KW-0044">Antibiotic</keyword>
<keyword id="KW-0929">Antimicrobial</keyword>
<keyword id="KW-0211">Defensin</keyword>
<keyword id="KW-0903">Direct protein sequencing</keyword>
<keyword id="KW-1015">Disulfide bond</keyword>
<keyword id="KW-0391">Immunity</keyword>
<keyword id="KW-0399">Innate immunity</keyword>
<keyword id="KW-0964">Secreted</keyword>
<keyword id="KW-0732">Signal</keyword>
<sequence length="87" mass="9592">MKFYLVLAFLTLCAVAVTALPAGDETRIDLETLEEDLRLVDGAQVTGELKRDKRVTCNIGEWVCVAHCNSKSKKSGYCSRGVCYCTN</sequence>
<accession>Q8WTD4</accession>
<feature type="signal peptide" evidence="1">
    <location>
        <begin position="1"/>
        <end position="19"/>
    </location>
</feature>
<feature type="propeptide" id="PRO_0000386437" evidence="1 4">
    <location>
        <begin position="20"/>
        <end position="44"/>
    </location>
</feature>
<feature type="chain" id="PRO_0000386438" description="Defensin-A" evidence="4">
    <location>
        <begin position="45"/>
        <end position="87"/>
    </location>
</feature>
<feature type="disulfide bond" evidence="2">
    <location>
        <begin position="57"/>
        <end position="78"/>
    </location>
</feature>
<feature type="disulfide bond" evidence="2">
    <location>
        <begin position="64"/>
        <end position="83"/>
    </location>
</feature>
<feature type="disulfide bond" evidence="2">
    <location>
        <begin position="68"/>
        <end position="85"/>
    </location>
</feature>
<reference evidence="7 8" key="1">
    <citation type="journal article" date="2001" name="Proc. Natl. Acad. Sci. U.S.A.">
        <title>Tsetse immune responses and trypanosome transmission: implications for the development of tsetse-based strategies to reduce trypanosomiasis.</title>
        <authorList>
            <person name="Hao Z."/>
            <person name="Kasumba I."/>
            <person name="Lehane M.J."/>
            <person name="Gibson W.C."/>
            <person name="Kwon J."/>
            <person name="Aksoy S."/>
        </authorList>
    </citation>
    <scope>NUCLEOTIDE SEQUENCE [MRNA]</scope>
    <scope>FUNCTION</scope>
    <scope>SUBCELLULAR LOCATION</scope>
    <scope>TISSUE SPECIFICITY</scope>
    <scope>INDUCTION</scope>
</reference>
<reference evidence="7" key="2">
    <citation type="journal article" date="2002" name="Insect Biochem. Mol. Biol.">
        <title>Immunopeptides in the defense reactions of Glossina morsitans to bacterial and Trypanosoma brucei brucei infections.</title>
        <authorList>
            <person name="Boulanger N."/>
            <person name="Brun R."/>
            <person name="Ehret-Sabatier L."/>
            <person name="Kunz C."/>
            <person name="Bulet P."/>
        </authorList>
    </citation>
    <scope>PROTEIN SEQUENCE OF 45-87</scope>
    <scope>FUNCTION</scope>
    <scope>SUBCELLULAR LOCATION</scope>
    <scope>TISSUE SPECIFICITY</scope>
    <scope>INDUCTION</scope>
    <scope>MASS SPECTROMETRY</scope>
    <source>
        <tissue evidence="4">Hemolymph</tissue>
    </source>
</reference>
<dbReference type="EMBL" id="AF368907">
    <property type="protein sequence ID" value="AAL34112.1"/>
    <property type="molecule type" value="mRNA"/>
</dbReference>
<dbReference type="SMR" id="Q8WTD4"/>
<dbReference type="STRING" id="37546.Q8WTD4"/>
<dbReference type="Proteomes" id="UP000092444">
    <property type="component" value="Unassembled WGS sequence"/>
</dbReference>
<dbReference type="GO" id="GO:0005576">
    <property type="term" value="C:extracellular region"/>
    <property type="evidence" value="ECO:0000314"/>
    <property type="project" value="UniProtKB"/>
</dbReference>
<dbReference type="GO" id="GO:0019731">
    <property type="term" value="P:antibacterial humoral response"/>
    <property type="evidence" value="ECO:0000314"/>
    <property type="project" value="UniProtKB"/>
</dbReference>
<dbReference type="GO" id="GO:0050829">
    <property type="term" value="P:defense response to Gram-negative bacterium"/>
    <property type="evidence" value="ECO:0000314"/>
    <property type="project" value="UniProtKB"/>
</dbReference>
<dbReference type="GO" id="GO:0050830">
    <property type="term" value="P:defense response to Gram-positive bacterium"/>
    <property type="evidence" value="ECO:0000314"/>
    <property type="project" value="UniProtKB"/>
</dbReference>
<dbReference type="GO" id="GO:0045087">
    <property type="term" value="P:innate immune response"/>
    <property type="evidence" value="ECO:0007669"/>
    <property type="project" value="UniProtKB-KW"/>
</dbReference>
<dbReference type="Gene3D" id="3.30.30.10">
    <property type="entry name" value="Knottin, scorpion toxin-like"/>
    <property type="match status" value="1"/>
</dbReference>
<dbReference type="InterPro" id="IPR001542">
    <property type="entry name" value="Defensin_invertebrate/fungal"/>
</dbReference>
<dbReference type="InterPro" id="IPR036574">
    <property type="entry name" value="Scorpion_toxin-like_sf"/>
</dbReference>
<dbReference type="Pfam" id="PF01097">
    <property type="entry name" value="Defensin_2"/>
    <property type="match status" value="1"/>
</dbReference>
<dbReference type="PROSITE" id="PS51378">
    <property type="entry name" value="INVERT_DEFENSINS"/>
    <property type="match status" value="1"/>
</dbReference>
<evidence type="ECO:0000255" key="1"/>
<evidence type="ECO:0000255" key="2">
    <source>
        <dbReference type="PROSITE-ProRule" id="PRU00710"/>
    </source>
</evidence>
<evidence type="ECO:0000269" key="3">
    <source>
    </source>
</evidence>
<evidence type="ECO:0000269" key="4">
    <source>
    </source>
</evidence>
<evidence type="ECO:0000303" key="5">
    <source>
    </source>
</evidence>
<evidence type="ECO:0000303" key="6">
    <source>
    </source>
</evidence>
<evidence type="ECO:0000305" key="7"/>
<evidence type="ECO:0000312" key="8">
    <source>
        <dbReference type="EMBL" id="AAL34112.1"/>
    </source>
</evidence>
<organism>
    <name type="scientific">Glossina morsitans morsitans</name>
    <name type="common">Savannah tsetse fly</name>
    <dbReference type="NCBI Taxonomy" id="37546"/>
    <lineage>
        <taxon>Eukaryota</taxon>
        <taxon>Metazoa</taxon>
        <taxon>Ecdysozoa</taxon>
        <taxon>Arthropoda</taxon>
        <taxon>Hexapoda</taxon>
        <taxon>Insecta</taxon>
        <taxon>Pterygota</taxon>
        <taxon>Neoptera</taxon>
        <taxon>Endopterygota</taxon>
        <taxon>Diptera</taxon>
        <taxon>Brachycera</taxon>
        <taxon>Muscomorpha</taxon>
        <taxon>Hippoboscoidea</taxon>
        <taxon>Glossinidae</taxon>
        <taxon>Glossina</taxon>
    </lineage>
</organism>
<proteinExistence type="evidence at protein level"/>